<feature type="chain" id="PRO_1000044918" description="(5-formylfuran-3-yl)methyl phosphate synthase">
    <location>
        <begin position="1"/>
        <end position="235"/>
    </location>
</feature>
<feature type="active site" description="Schiff-base intermediate with substrate" evidence="1">
    <location>
        <position position="27"/>
    </location>
</feature>
<feature type="active site" description="Proton acceptor" evidence="1">
    <location>
        <position position="85"/>
    </location>
</feature>
<dbReference type="EC" id="4.2.3.153" evidence="1"/>
<dbReference type="EMBL" id="CP000743">
    <property type="protein sequence ID" value="ABR56068.1"/>
    <property type="molecule type" value="Genomic_DNA"/>
</dbReference>
<dbReference type="RefSeq" id="WP_011973200.1">
    <property type="nucleotide sequence ID" value="NC_009635.1"/>
</dbReference>
<dbReference type="SMR" id="A6UU96"/>
<dbReference type="STRING" id="419665.Maeo_0482"/>
<dbReference type="GeneID" id="5327683"/>
<dbReference type="KEGG" id="mae:Maeo_0482"/>
<dbReference type="eggNOG" id="arCOG04482">
    <property type="taxonomic scope" value="Archaea"/>
</dbReference>
<dbReference type="HOGENOM" id="CLU_068659_0_0_2"/>
<dbReference type="OrthoDB" id="81473at2157"/>
<dbReference type="UniPathway" id="UPA00080"/>
<dbReference type="Proteomes" id="UP000001106">
    <property type="component" value="Chromosome"/>
</dbReference>
<dbReference type="GO" id="GO:0016830">
    <property type="term" value="F:carbon-carbon lyase activity"/>
    <property type="evidence" value="ECO:0007669"/>
    <property type="project" value="UniProtKB-UniRule"/>
</dbReference>
<dbReference type="GO" id="GO:2001120">
    <property type="term" value="P:methanofuran biosynthetic process"/>
    <property type="evidence" value="ECO:0007669"/>
    <property type="project" value="UniProtKB-UniRule"/>
</dbReference>
<dbReference type="CDD" id="cd00945">
    <property type="entry name" value="Aldolase_Class_I"/>
    <property type="match status" value="1"/>
</dbReference>
<dbReference type="HAMAP" id="MF_00681">
    <property type="entry name" value="MfnB"/>
    <property type="match status" value="1"/>
</dbReference>
<dbReference type="InterPro" id="IPR007565">
    <property type="entry name" value="4HFCP_synth"/>
</dbReference>
<dbReference type="InterPro" id="IPR035081">
    <property type="entry name" value="4HFCP_synth_arc"/>
</dbReference>
<dbReference type="NCBIfam" id="NF002573">
    <property type="entry name" value="PRK02227.1-1"/>
    <property type="match status" value="1"/>
</dbReference>
<dbReference type="NCBIfam" id="NF002575">
    <property type="entry name" value="PRK02227.1-3"/>
    <property type="match status" value="1"/>
</dbReference>
<dbReference type="Pfam" id="PF04476">
    <property type="entry name" value="4HFCP_synth"/>
    <property type="match status" value="1"/>
</dbReference>
<dbReference type="PIRSF" id="PIRSF015957">
    <property type="entry name" value="UCP015957"/>
    <property type="match status" value="1"/>
</dbReference>
<dbReference type="SUPFAM" id="SSF51569">
    <property type="entry name" value="Aldolase"/>
    <property type="match status" value="1"/>
</dbReference>
<comment type="function">
    <text evidence="1">Catalyzes the formation of 4-(hydroxymethyl)-2-furancarboxaldehyde phosphate (4-HFC-P) from two molecules of glyceraldehyde-3-P (GA-3-P).</text>
</comment>
<comment type="catalytic activity">
    <reaction evidence="1">
        <text>2 D-glyceraldehyde 3-phosphate = 4-(hydroxymethyl)-2-furancarboxaldehyde phosphate + phosphate + 2 H2O</text>
        <dbReference type="Rhea" id="RHEA:43536"/>
        <dbReference type="ChEBI" id="CHEBI:15377"/>
        <dbReference type="ChEBI" id="CHEBI:43474"/>
        <dbReference type="ChEBI" id="CHEBI:59776"/>
        <dbReference type="ChEBI" id="CHEBI:83407"/>
        <dbReference type="EC" id="4.2.3.153"/>
    </reaction>
</comment>
<comment type="pathway">
    <text evidence="1">Cofactor biosynthesis; methanofuran biosynthesis.</text>
</comment>
<comment type="similarity">
    <text evidence="1">Belongs to the MfnB family.</text>
</comment>
<proteinExistence type="inferred from homology"/>
<gene>
    <name evidence="1" type="primary">mfnB</name>
    <name type="ordered locus">Maeo_0482</name>
</gene>
<keyword id="KW-0456">Lyase</keyword>
<keyword id="KW-0704">Schiff base</keyword>
<name>MFNB_META3</name>
<evidence type="ECO:0000255" key="1">
    <source>
        <dbReference type="HAMAP-Rule" id="MF_00681"/>
    </source>
</evidence>
<reference key="1">
    <citation type="submission" date="2007-06" db="EMBL/GenBank/DDBJ databases">
        <title>Complete sequence of Methanococcus aeolicus Nankai-3.</title>
        <authorList>
            <consortium name="US DOE Joint Genome Institute"/>
            <person name="Copeland A."/>
            <person name="Lucas S."/>
            <person name="Lapidus A."/>
            <person name="Barry K."/>
            <person name="Glavina del Rio T."/>
            <person name="Dalin E."/>
            <person name="Tice H."/>
            <person name="Pitluck S."/>
            <person name="Chain P."/>
            <person name="Malfatti S."/>
            <person name="Shin M."/>
            <person name="Vergez L."/>
            <person name="Schmutz J."/>
            <person name="Larimer F."/>
            <person name="Land M."/>
            <person name="Hauser L."/>
            <person name="Kyrpides N."/>
            <person name="Lykidis A."/>
            <person name="Sieprawska-Lupa M."/>
            <person name="Whitman W.B."/>
            <person name="Richardson P."/>
        </authorList>
    </citation>
    <scope>NUCLEOTIDE SEQUENCE [LARGE SCALE GENOMIC DNA]</scope>
    <source>
        <strain>ATCC BAA-1280 / DSM 17508 / OCM 812 / Nankai-3</strain>
    </source>
</reference>
<sequence length="235" mass="25124">MLLLISPKNIEEAKEAIAGGAHIIDVKNPPEGSLGANFPWVIEEVKNITPKNLLVSATVGDVPYKPGTVSLAALGVAVSGADYIKVGLYGTKTYYEAVDVMEKVVKAVKSVDKNKIVVAAGYADAYRVGAVDPLIIPKIARDSGCDVAMLDTALKDGMSLFDHLDEKLLKEFIEETRSYGLKSALAGSIKKEEIAILKKLGCDIVGIRGAACSYGDRNEGTIQKELVEELVKLCE</sequence>
<protein>
    <recommendedName>
        <fullName evidence="1">(5-formylfuran-3-yl)methyl phosphate synthase</fullName>
        <ecNumber evidence="1">4.2.3.153</ecNumber>
    </recommendedName>
    <alternativeName>
        <fullName evidence="1">4-(hydroxymethyl)-2-furancarboxaldehyde-phosphate synthase</fullName>
        <shortName evidence="1">4-HFC-P synthase</shortName>
    </alternativeName>
</protein>
<accession>A6UU96</accession>
<organism>
    <name type="scientific">Methanococcus aeolicus (strain ATCC BAA-1280 / DSM 17508 / OCM 812 / Nankai-3)</name>
    <dbReference type="NCBI Taxonomy" id="419665"/>
    <lineage>
        <taxon>Archaea</taxon>
        <taxon>Methanobacteriati</taxon>
        <taxon>Methanobacteriota</taxon>
        <taxon>Methanomada group</taxon>
        <taxon>Methanococci</taxon>
        <taxon>Methanococcales</taxon>
        <taxon>Methanococcaceae</taxon>
        <taxon>Methanococcus</taxon>
    </lineage>
</organism>